<evidence type="ECO:0000255" key="1">
    <source>
        <dbReference type="HAMAP-Rule" id="MF_00049"/>
    </source>
</evidence>
<reference key="1">
    <citation type="journal article" date="2003" name="Proc. Natl. Acad. Sci. U.S.A.">
        <title>The complete genome sequence of Chromobacterium violaceum reveals remarkable and exploitable bacterial adaptability.</title>
        <authorList>
            <person name="Vasconcelos A.T.R."/>
            <person name="de Almeida D.F."/>
            <person name="Hungria M."/>
            <person name="Guimaraes C.T."/>
            <person name="Antonio R.V."/>
            <person name="Almeida F.C."/>
            <person name="de Almeida L.G.P."/>
            <person name="de Almeida R."/>
            <person name="Alves-Gomes J.A."/>
            <person name="Andrade E.M."/>
            <person name="Araripe J."/>
            <person name="de Araujo M.F.F."/>
            <person name="Astolfi-Filho S."/>
            <person name="Azevedo V."/>
            <person name="Baptista A.J."/>
            <person name="Bataus L.A.M."/>
            <person name="Batista J.S."/>
            <person name="Belo A."/>
            <person name="van den Berg C."/>
            <person name="Bogo M."/>
            <person name="Bonatto S."/>
            <person name="Bordignon J."/>
            <person name="Brigido M.M."/>
            <person name="Brito C.A."/>
            <person name="Brocchi M."/>
            <person name="Burity H.A."/>
            <person name="Camargo A.A."/>
            <person name="Cardoso D.D.P."/>
            <person name="Carneiro N.P."/>
            <person name="Carraro D.M."/>
            <person name="Carvalho C.M.B."/>
            <person name="Cascardo J.C.M."/>
            <person name="Cavada B.S."/>
            <person name="Chueire L.M.O."/>
            <person name="Creczynski-Pasa T.B."/>
            <person name="Cunha-Junior N.C."/>
            <person name="Fagundes N."/>
            <person name="Falcao C.L."/>
            <person name="Fantinatti F."/>
            <person name="Farias I.P."/>
            <person name="Felipe M.S.S."/>
            <person name="Ferrari L.P."/>
            <person name="Ferro J.A."/>
            <person name="Ferro M.I.T."/>
            <person name="Franco G.R."/>
            <person name="Freitas N.S.A."/>
            <person name="Furlan L.R."/>
            <person name="Gazzinelli R.T."/>
            <person name="Gomes E.A."/>
            <person name="Goncalves P.R."/>
            <person name="Grangeiro T.B."/>
            <person name="Grattapaglia D."/>
            <person name="Grisard E.C."/>
            <person name="Hanna E.S."/>
            <person name="Jardim S.N."/>
            <person name="Laurino J."/>
            <person name="Leoi L.C.T."/>
            <person name="Lima L.F.A."/>
            <person name="Loureiro M.F."/>
            <person name="Lyra M.C.C.P."/>
            <person name="Madeira H.M.F."/>
            <person name="Manfio G.P."/>
            <person name="Maranhao A.Q."/>
            <person name="Martins W.S."/>
            <person name="di Mauro S.M.Z."/>
            <person name="de Medeiros S.R.B."/>
            <person name="Meissner R.V."/>
            <person name="Moreira M.A.M."/>
            <person name="Nascimento F.F."/>
            <person name="Nicolas M.F."/>
            <person name="Oliveira J.G."/>
            <person name="Oliveira S.C."/>
            <person name="Paixao R.F.C."/>
            <person name="Parente J.A."/>
            <person name="Pedrosa F.O."/>
            <person name="Pena S.D.J."/>
            <person name="Pereira J.O."/>
            <person name="Pereira M."/>
            <person name="Pinto L.S.R.C."/>
            <person name="Pinto L.S."/>
            <person name="Porto J.I.R."/>
            <person name="Potrich D.P."/>
            <person name="Ramalho-Neto C.E."/>
            <person name="Reis A.M.M."/>
            <person name="Rigo L.U."/>
            <person name="Rondinelli E."/>
            <person name="Santos E.B.P."/>
            <person name="Santos F.R."/>
            <person name="Schneider M.P.C."/>
            <person name="Seuanez H.N."/>
            <person name="Silva A.M.R."/>
            <person name="da Silva A.L.C."/>
            <person name="Silva D.W."/>
            <person name="Silva R."/>
            <person name="Simoes I.C."/>
            <person name="Simon D."/>
            <person name="Soares C.M.A."/>
            <person name="Soares R.B.A."/>
            <person name="Souza E.M."/>
            <person name="Souza K.R.L."/>
            <person name="Souza R.C."/>
            <person name="Steffens M.B.R."/>
            <person name="Steindel M."/>
            <person name="Teixeira S.R."/>
            <person name="Urmenyi T."/>
            <person name="Vettore A."/>
            <person name="Wassem R."/>
            <person name="Zaha A."/>
            <person name="Simpson A.J.G."/>
        </authorList>
    </citation>
    <scope>NUCLEOTIDE SEQUENCE [LARGE SCALE GENOMIC DNA]</scope>
    <source>
        <strain>ATCC 12472 / DSM 30191 / JCM 1249 / CCUG 213 / NBRC 12614 / NCIMB 9131 / NCTC 9757 / MK</strain>
    </source>
</reference>
<proteinExistence type="inferred from homology"/>
<sequence>MQEQYSPRAVEAAAQQKWQKTAAFKAVEDASRPKYYALSMFPYPSGKLHMGHVRNYTITDVLARFKRLQGFNVLQPMGWDAFGLPAENAAMKNGGAPAAWTYANIEYMKTQLDSLGFALDWERELATCKPDYYRWEQWLFTRLFEKGVIYKKNGVVNWDPVDQTVLANEQVVDGRGWRSGALVEKREIPMYYFRITDYAEQLLADLDKLDGWPEQVKTMQRNWIGKSYGSDVVFPYDEASIGHAGELKVYTTRPDTLMGATYVAVAAEHPLATQAAAGNAALQAFIAECKSGSVAEADVAKMEKKGMDTGLSVIHPLTGERLPVWVANYVLWGYGEGAVMAVPAHDERDFEFANKYQLPIKQVIALASGDGEYDAANWQEWYGAKDDTVKTVNSGKYDGLGYQAAFDAIIGDLQAKSLGQKKTQYRLRDWGISRQRYWGCPIPIIHCPSCGDVPVPEKDLPVTLPENVIPDGAGSPLAKMPEFYETSCPKCGGAAKRETDTMDTFVESSWYYARYASPKCDTAMVDKQAADYWLQVDQYVGGIEHAILHLLYARFFHKLMRDEGLVSSDEPFKSLLTQGMVVCETFYRDLPNGTKDWIAPQDVILERDAKGKIVAAKHRVDGQPVVVGGIEKMSKSKNNGVDPQEFIEKYGADTARLFMMFAAPPEQSLEWSDAGVEGAFRFLKRLWKTAREHVEAGVVAPYASGELNASQKELRFKLHGTIQKVADDYGRRQQFNTAIAAVMELLNAYDKADTSGDIGRAVAQEVLEAATLLLSPIVPHVCDGIWNALKPGTELLAQAWPKVDEAALVKSEIELMVQVCGKLRGSVTVAADAAKDAIEAAALAHENVIKFMEGKPAKKIIVVPGRLVNIVV</sequence>
<gene>
    <name evidence="1" type="primary">leuS</name>
    <name type="ordered locus">CV_0505</name>
</gene>
<keyword id="KW-0030">Aminoacyl-tRNA synthetase</keyword>
<keyword id="KW-0067">ATP-binding</keyword>
<keyword id="KW-0963">Cytoplasm</keyword>
<keyword id="KW-0436">Ligase</keyword>
<keyword id="KW-0547">Nucleotide-binding</keyword>
<keyword id="KW-0648">Protein biosynthesis</keyword>
<keyword id="KW-1185">Reference proteome</keyword>
<comment type="catalytic activity">
    <reaction evidence="1">
        <text>tRNA(Leu) + L-leucine + ATP = L-leucyl-tRNA(Leu) + AMP + diphosphate</text>
        <dbReference type="Rhea" id="RHEA:11688"/>
        <dbReference type="Rhea" id="RHEA-COMP:9613"/>
        <dbReference type="Rhea" id="RHEA-COMP:9622"/>
        <dbReference type="ChEBI" id="CHEBI:30616"/>
        <dbReference type="ChEBI" id="CHEBI:33019"/>
        <dbReference type="ChEBI" id="CHEBI:57427"/>
        <dbReference type="ChEBI" id="CHEBI:78442"/>
        <dbReference type="ChEBI" id="CHEBI:78494"/>
        <dbReference type="ChEBI" id="CHEBI:456215"/>
        <dbReference type="EC" id="6.1.1.4"/>
    </reaction>
</comment>
<comment type="subcellular location">
    <subcellularLocation>
        <location evidence="1">Cytoplasm</location>
    </subcellularLocation>
</comment>
<comment type="similarity">
    <text evidence="1">Belongs to the class-I aminoacyl-tRNA synthetase family.</text>
</comment>
<protein>
    <recommendedName>
        <fullName evidence="1">Leucine--tRNA ligase</fullName>
        <ecNumber evidence="1">6.1.1.4</ecNumber>
    </recommendedName>
    <alternativeName>
        <fullName evidence="1">Leucyl-tRNA synthetase</fullName>
        <shortName evidence="1">LeuRS</shortName>
    </alternativeName>
</protein>
<name>SYL_CHRVO</name>
<dbReference type="EC" id="6.1.1.4" evidence="1"/>
<dbReference type="EMBL" id="AE016825">
    <property type="protein sequence ID" value="AAQ58182.1"/>
    <property type="molecule type" value="Genomic_DNA"/>
</dbReference>
<dbReference type="RefSeq" id="WP_011134060.1">
    <property type="nucleotide sequence ID" value="NC_005085.1"/>
</dbReference>
<dbReference type="SMR" id="Q7P0R1"/>
<dbReference type="STRING" id="243365.CV_0505"/>
<dbReference type="KEGG" id="cvi:CV_0505"/>
<dbReference type="eggNOG" id="COG0495">
    <property type="taxonomic scope" value="Bacteria"/>
</dbReference>
<dbReference type="HOGENOM" id="CLU_004427_0_0_4"/>
<dbReference type="OrthoDB" id="9810365at2"/>
<dbReference type="Proteomes" id="UP000001424">
    <property type="component" value="Chromosome"/>
</dbReference>
<dbReference type="GO" id="GO:0005829">
    <property type="term" value="C:cytosol"/>
    <property type="evidence" value="ECO:0007669"/>
    <property type="project" value="TreeGrafter"/>
</dbReference>
<dbReference type="GO" id="GO:0002161">
    <property type="term" value="F:aminoacyl-tRNA deacylase activity"/>
    <property type="evidence" value="ECO:0007669"/>
    <property type="project" value="InterPro"/>
</dbReference>
<dbReference type="GO" id="GO:0005524">
    <property type="term" value="F:ATP binding"/>
    <property type="evidence" value="ECO:0007669"/>
    <property type="project" value="UniProtKB-UniRule"/>
</dbReference>
<dbReference type="GO" id="GO:0004823">
    <property type="term" value="F:leucine-tRNA ligase activity"/>
    <property type="evidence" value="ECO:0007669"/>
    <property type="project" value="UniProtKB-UniRule"/>
</dbReference>
<dbReference type="GO" id="GO:0006429">
    <property type="term" value="P:leucyl-tRNA aminoacylation"/>
    <property type="evidence" value="ECO:0007669"/>
    <property type="project" value="UniProtKB-UniRule"/>
</dbReference>
<dbReference type="CDD" id="cd07958">
    <property type="entry name" value="Anticodon_Ia_Leu_BEm"/>
    <property type="match status" value="1"/>
</dbReference>
<dbReference type="CDD" id="cd00812">
    <property type="entry name" value="LeuRS_core"/>
    <property type="match status" value="1"/>
</dbReference>
<dbReference type="FunFam" id="1.10.730.10:FF:000003">
    <property type="entry name" value="Leucine--tRNA ligase"/>
    <property type="match status" value="1"/>
</dbReference>
<dbReference type="FunFam" id="2.20.28.290:FF:000001">
    <property type="entry name" value="Leucine--tRNA ligase"/>
    <property type="match status" value="1"/>
</dbReference>
<dbReference type="FunFam" id="3.10.20.590:FF:000001">
    <property type="entry name" value="Leucine--tRNA ligase"/>
    <property type="match status" value="1"/>
</dbReference>
<dbReference type="FunFam" id="3.40.50.620:FF:000003">
    <property type="entry name" value="Leucine--tRNA ligase"/>
    <property type="match status" value="1"/>
</dbReference>
<dbReference type="FunFam" id="3.40.50.620:FF:000124">
    <property type="entry name" value="Leucine--tRNA ligase"/>
    <property type="match status" value="1"/>
</dbReference>
<dbReference type="FunFam" id="3.90.740.10:FF:000012">
    <property type="entry name" value="Leucine--tRNA ligase"/>
    <property type="match status" value="1"/>
</dbReference>
<dbReference type="Gene3D" id="2.20.28.290">
    <property type="match status" value="1"/>
</dbReference>
<dbReference type="Gene3D" id="3.10.20.590">
    <property type="match status" value="1"/>
</dbReference>
<dbReference type="Gene3D" id="3.40.50.620">
    <property type="entry name" value="HUPs"/>
    <property type="match status" value="2"/>
</dbReference>
<dbReference type="Gene3D" id="1.10.730.10">
    <property type="entry name" value="Isoleucyl-tRNA Synthetase, Domain 1"/>
    <property type="match status" value="1"/>
</dbReference>
<dbReference type="Gene3D" id="3.90.740.10">
    <property type="entry name" value="Valyl/Leucyl/Isoleucyl-tRNA synthetase, editing domain"/>
    <property type="match status" value="1"/>
</dbReference>
<dbReference type="HAMAP" id="MF_00049_B">
    <property type="entry name" value="Leu_tRNA_synth_B"/>
    <property type="match status" value="1"/>
</dbReference>
<dbReference type="InterPro" id="IPR001412">
    <property type="entry name" value="aa-tRNA-synth_I_CS"/>
</dbReference>
<dbReference type="InterPro" id="IPR002300">
    <property type="entry name" value="aa-tRNA-synth_Ia"/>
</dbReference>
<dbReference type="InterPro" id="IPR002302">
    <property type="entry name" value="Leu-tRNA-ligase"/>
</dbReference>
<dbReference type="InterPro" id="IPR025709">
    <property type="entry name" value="Leu_tRNA-synth_edit"/>
</dbReference>
<dbReference type="InterPro" id="IPR013155">
    <property type="entry name" value="M/V/L/I-tRNA-synth_anticd-bd"/>
</dbReference>
<dbReference type="InterPro" id="IPR015413">
    <property type="entry name" value="Methionyl/Leucyl_tRNA_Synth"/>
</dbReference>
<dbReference type="InterPro" id="IPR014729">
    <property type="entry name" value="Rossmann-like_a/b/a_fold"/>
</dbReference>
<dbReference type="InterPro" id="IPR009080">
    <property type="entry name" value="tRNAsynth_Ia_anticodon-bd"/>
</dbReference>
<dbReference type="InterPro" id="IPR009008">
    <property type="entry name" value="Val/Leu/Ile-tRNA-synth_edit"/>
</dbReference>
<dbReference type="NCBIfam" id="TIGR00396">
    <property type="entry name" value="leuS_bact"/>
    <property type="match status" value="1"/>
</dbReference>
<dbReference type="PANTHER" id="PTHR43740:SF2">
    <property type="entry name" value="LEUCINE--TRNA LIGASE, MITOCHONDRIAL"/>
    <property type="match status" value="1"/>
</dbReference>
<dbReference type="PANTHER" id="PTHR43740">
    <property type="entry name" value="LEUCYL-TRNA SYNTHETASE"/>
    <property type="match status" value="1"/>
</dbReference>
<dbReference type="Pfam" id="PF08264">
    <property type="entry name" value="Anticodon_1"/>
    <property type="match status" value="1"/>
</dbReference>
<dbReference type="Pfam" id="PF00133">
    <property type="entry name" value="tRNA-synt_1"/>
    <property type="match status" value="2"/>
</dbReference>
<dbReference type="Pfam" id="PF13603">
    <property type="entry name" value="tRNA-synt_1_2"/>
    <property type="match status" value="1"/>
</dbReference>
<dbReference type="Pfam" id="PF09334">
    <property type="entry name" value="tRNA-synt_1g"/>
    <property type="match status" value="1"/>
</dbReference>
<dbReference type="PRINTS" id="PR00985">
    <property type="entry name" value="TRNASYNTHLEU"/>
</dbReference>
<dbReference type="SUPFAM" id="SSF47323">
    <property type="entry name" value="Anticodon-binding domain of a subclass of class I aminoacyl-tRNA synthetases"/>
    <property type="match status" value="1"/>
</dbReference>
<dbReference type="SUPFAM" id="SSF52374">
    <property type="entry name" value="Nucleotidylyl transferase"/>
    <property type="match status" value="1"/>
</dbReference>
<dbReference type="SUPFAM" id="SSF50677">
    <property type="entry name" value="ValRS/IleRS/LeuRS editing domain"/>
    <property type="match status" value="1"/>
</dbReference>
<dbReference type="PROSITE" id="PS00178">
    <property type="entry name" value="AA_TRNA_LIGASE_I"/>
    <property type="match status" value="1"/>
</dbReference>
<feature type="chain" id="PRO_0000152001" description="Leucine--tRNA ligase">
    <location>
        <begin position="1"/>
        <end position="872"/>
    </location>
</feature>
<feature type="short sequence motif" description="'HIGH' region">
    <location>
        <begin position="42"/>
        <end position="52"/>
    </location>
</feature>
<feature type="short sequence motif" description="'KMSKS' region">
    <location>
        <begin position="632"/>
        <end position="636"/>
    </location>
</feature>
<feature type="binding site" evidence="1">
    <location>
        <position position="635"/>
    </location>
    <ligand>
        <name>ATP</name>
        <dbReference type="ChEBI" id="CHEBI:30616"/>
    </ligand>
</feature>
<organism>
    <name type="scientific">Chromobacterium violaceum (strain ATCC 12472 / DSM 30191 / JCM 1249 / CCUG 213 / NBRC 12614 / NCIMB 9131 / NCTC 9757 / MK)</name>
    <dbReference type="NCBI Taxonomy" id="243365"/>
    <lineage>
        <taxon>Bacteria</taxon>
        <taxon>Pseudomonadati</taxon>
        <taxon>Pseudomonadota</taxon>
        <taxon>Betaproteobacteria</taxon>
        <taxon>Neisseriales</taxon>
        <taxon>Chromobacteriaceae</taxon>
        <taxon>Chromobacterium</taxon>
    </lineage>
</organism>
<accession>Q7P0R1</accession>